<reference key="1">
    <citation type="submission" date="2007-08" db="EMBL/GenBank/DDBJ databases">
        <authorList>
            <consortium name="The Vibrio harveyi Genome Sequencing Project"/>
            <person name="Bassler B."/>
            <person name="Clifton S.W."/>
            <person name="Fulton L."/>
            <person name="Delehaunty K."/>
            <person name="Fronick C."/>
            <person name="Harrison M."/>
            <person name="Markivic C."/>
            <person name="Fulton R."/>
            <person name="Tin-Wollam A.-M."/>
            <person name="Shah N."/>
            <person name="Pepin K."/>
            <person name="Nash W."/>
            <person name="Thiruvilangam P."/>
            <person name="Bhonagiri V."/>
            <person name="Waters C."/>
            <person name="Tu K.C."/>
            <person name="Irgon J."/>
            <person name="Wilson R.K."/>
        </authorList>
    </citation>
    <scope>NUCLEOTIDE SEQUENCE [LARGE SCALE GENOMIC DNA]</scope>
    <source>
        <strain>ATCC BAA-1116 / BB120</strain>
    </source>
</reference>
<feature type="chain" id="PRO_0000362502" description="ATP synthase subunit a 2">
    <location>
        <begin position="1"/>
        <end position="255"/>
    </location>
</feature>
<feature type="transmembrane region" description="Helical" evidence="1">
    <location>
        <begin position="24"/>
        <end position="44"/>
    </location>
</feature>
<feature type="transmembrane region" description="Helical" evidence="1">
    <location>
        <begin position="86"/>
        <end position="106"/>
    </location>
</feature>
<feature type="transmembrane region" description="Helical" evidence="1">
    <location>
        <begin position="131"/>
        <end position="151"/>
    </location>
</feature>
<feature type="transmembrane region" description="Helical" evidence="1">
    <location>
        <begin position="205"/>
        <end position="225"/>
    </location>
</feature>
<feature type="transmembrane region" description="Helical" evidence="1">
    <location>
        <begin position="226"/>
        <end position="246"/>
    </location>
</feature>
<keyword id="KW-0066">ATP synthesis</keyword>
<keyword id="KW-0997">Cell inner membrane</keyword>
<keyword id="KW-1003">Cell membrane</keyword>
<keyword id="KW-0138">CF(0)</keyword>
<keyword id="KW-0375">Hydrogen ion transport</keyword>
<keyword id="KW-0406">Ion transport</keyword>
<keyword id="KW-0472">Membrane</keyword>
<keyword id="KW-0812">Transmembrane</keyword>
<keyword id="KW-1133">Transmembrane helix</keyword>
<keyword id="KW-0813">Transport</keyword>
<comment type="function">
    <text evidence="1">Key component of the proton channel; it plays a direct role in the translocation of protons across the membrane.</text>
</comment>
<comment type="subunit">
    <text evidence="1">F-type ATPases have 2 components, CF(1) - the catalytic core - and CF(0) - the membrane proton channel. CF(1) has five subunits: alpha(3), beta(3), gamma(1), delta(1), epsilon(1). CF(0) has three main subunits: a(1), b(2) and c(9-12). The alpha and beta chains form an alternating ring which encloses part of the gamma chain. CF(1) is attached to CF(0) by a central stalk formed by the gamma and epsilon chains, while a peripheral stalk is formed by the delta and b chains.</text>
</comment>
<comment type="subcellular location">
    <subcellularLocation>
        <location evidence="1">Cell inner membrane</location>
        <topology evidence="1">Multi-pass membrane protein</topology>
    </subcellularLocation>
</comment>
<comment type="similarity">
    <text evidence="1">Belongs to the ATPase A chain family.</text>
</comment>
<protein>
    <recommendedName>
        <fullName evidence="1">ATP synthase subunit a 2</fullName>
    </recommendedName>
    <alternativeName>
        <fullName evidence="1">ATP synthase F0 sector subunit a 2</fullName>
    </alternativeName>
    <alternativeName>
        <fullName evidence="1">F-ATPase subunit 6 2</fullName>
    </alternativeName>
</protein>
<accession>A7N2U2</accession>
<name>ATP62_VIBC1</name>
<proteinExistence type="inferred from homology"/>
<organism>
    <name type="scientific">Vibrio campbellii (strain ATCC BAA-1116)</name>
    <dbReference type="NCBI Taxonomy" id="2902295"/>
    <lineage>
        <taxon>Bacteria</taxon>
        <taxon>Pseudomonadati</taxon>
        <taxon>Pseudomonadota</taxon>
        <taxon>Gammaproteobacteria</taxon>
        <taxon>Vibrionales</taxon>
        <taxon>Vibrionaceae</taxon>
        <taxon>Vibrio</taxon>
    </lineage>
</organism>
<dbReference type="EMBL" id="CP000790">
    <property type="protein sequence ID" value="ABU74003.1"/>
    <property type="molecule type" value="Genomic_DNA"/>
</dbReference>
<dbReference type="SMR" id="A7N2U2"/>
<dbReference type="KEGG" id="vha:VIBHAR_06110"/>
<dbReference type="PATRIC" id="fig|338187.25.peg.4214"/>
<dbReference type="Proteomes" id="UP000008152">
    <property type="component" value="Chromosome II"/>
</dbReference>
<dbReference type="GO" id="GO:0005886">
    <property type="term" value="C:plasma membrane"/>
    <property type="evidence" value="ECO:0007669"/>
    <property type="project" value="UniProtKB-SubCell"/>
</dbReference>
<dbReference type="GO" id="GO:0045259">
    <property type="term" value="C:proton-transporting ATP synthase complex"/>
    <property type="evidence" value="ECO:0007669"/>
    <property type="project" value="UniProtKB-KW"/>
</dbReference>
<dbReference type="GO" id="GO:0046933">
    <property type="term" value="F:proton-transporting ATP synthase activity, rotational mechanism"/>
    <property type="evidence" value="ECO:0007669"/>
    <property type="project" value="UniProtKB-UniRule"/>
</dbReference>
<dbReference type="GO" id="GO:0042777">
    <property type="term" value="P:proton motive force-driven plasma membrane ATP synthesis"/>
    <property type="evidence" value="ECO:0007669"/>
    <property type="project" value="TreeGrafter"/>
</dbReference>
<dbReference type="CDD" id="cd00310">
    <property type="entry name" value="ATP-synt_Fo_a_6"/>
    <property type="match status" value="1"/>
</dbReference>
<dbReference type="FunFam" id="1.20.120.220:FF:000002">
    <property type="entry name" value="ATP synthase subunit a"/>
    <property type="match status" value="1"/>
</dbReference>
<dbReference type="Gene3D" id="1.20.120.220">
    <property type="entry name" value="ATP synthase, F0 complex, subunit A"/>
    <property type="match status" value="1"/>
</dbReference>
<dbReference type="HAMAP" id="MF_01393">
    <property type="entry name" value="ATP_synth_a_bact"/>
    <property type="match status" value="1"/>
</dbReference>
<dbReference type="InterPro" id="IPR045082">
    <property type="entry name" value="ATP_syn_F0_a_bact/chloroplast"/>
</dbReference>
<dbReference type="InterPro" id="IPR000568">
    <property type="entry name" value="ATP_synth_F0_asu"/>
</dbReference>
<dbReference type="InterPro" id="IPR023011">
    <property type="entry name" value="ATP_synth_F0_asu_AS"/>
</dbReference>
<dbReference type="InterPro" id="IPR035908">
    <property type="entry name" value="F0_ATP_A_sf"/>
</dbReference>
<dbReference type="NCBIfam" id="TIGR01131">
    <property type="entry name" value="ATP_synt_6_or_A"/>
    <property type="match status" value="1"/>
</dbReference>
<dbReference type="NCBIfam" id="NF004477">
    <property type="entry name" value="PRK05815.1-1"/>
    <property type="match status" value="1"/>
</dbReference>
<dbReference type="PANTHER" id="PTHR42823">
    <property type="entry name" value="ATP SYNTHASE SUBUNIT A, CHLOROPLASTIC"/>
    <property type="match status" value="1"/>
</dbReference>
<dbReference type="PANTHER" id="PTHR42823:SF3">
    <property type="entry name" value="ATP SYNTHASE SUBUNIT A, CHLOROPLASTIC"/>
    <property type="match status" value="1"/>
</dbReference>
<dbReference type="Pfam" id="PF00119">
    <property type="entry name" value="ATP-synt_A"/>
    <property type="match status" value="1"/>
</dbReference>
<dbReference type="PRINTS" id="PR00123">
    <property type="entry name" value="ATPASEA"/>
</dbReference>
<dbReference type="SUPFAM" id="SSF81336">
    <property type="entry name" value="F1F0 ATP synthase subunit A"/>
    <property type="match status" value="1"/>
</dbReference>
<dbReference type="PROSITE" id="PS00449">
    <property type="entry name" value="ATPASE_A"/>
    <property type="match status" value="1"/>
</dbReference>
<evidence type="ECO:0000255" key="1">
    <source>
        <dbReference type="HAMAP-Rule" id="MF_01393"/>
    </source>
</evidence>
<sequence>METVQSAHEYIEHHLTFLTAGDGWFGINLDSMIMVWLTGLVFILSFRYAVTKGTKGVPGRFQCLIEIIFEFVDDIVKEIFQAKDKLIGPLALTIFVWVLLMNAVDLLPIDLIPALTSAVGVEHFRDLPSADINITMSMALGVFILVLGYTFKNKGVKGFIKELTTQPFSHPLLYPVNLVLELVTLISKPISLGLRLFGNMYAGEMIFILIALMPWWMQWALSVPWALFHILIVVLQAFIFMVLTVVYLGMAVEEH</sequence>
<gene>
    <name evidence="1" type="primary">atpB2</name>
    <name type="ordered locus">VIBHAR_06110</name>
</gene>